<dbReference type="EC" id="2.1.1.67"/>
<dbReference type="EMBL" id="AF037045">
    <property type="protein sequence ID" value="AAD02094.1"/>
    <property type="molecule type" value="mRNA"/>
</dbReference>
<dbReference type="SMR" id="Q9QX22"/>
<dbReference type="MGI" id="MGI:98812">
    <property type="gene designation" value="Tpmt"/>
</dbReference>
<dbReference type="GO" id="GO:0005737">
    <property type="term" value="C:cytoplasm"/>
    <property type="evidence" value="ECO:0007669"/>
    <property type="project" value="UniProtKB-SubCell"/>
</dbReference>
<dbReference type="GO" id="GO:0008119">
    <property type="term" value="F:thiopurine S-methyltransferase activity"/>
    <property type="evidence" value="ECO:0007669"/>
    <property type="project" value="UniProtKB-EC"/>
</dbReference>
<dbReference type="GO" id="GO:0032259">
    <property type="term" value="P:methylation"/>
    <property type="evidence" value="ECO:0007669"/>
    <property type="project" value="UniProtKB-KW"/>
</dbReference>
<dbReference type="FunFam" id="3.40.50.150:FF:000101">
    <property type="entry name" value="Thiopurine S-methyltransferase"/>
    <property type="match status" value="1"/>
</dbReference>
<dbReference type="Gene3D" id="3.40.50.150">
    <property type="entry name" value="Vaccinia Virus protein VP39"/>
    <property type="match status" value="1"/>
</dbReference>
<dbReference type="HAMAP" id="MF_00812">
    <property type="entry name" value="Thiopur_methtran"/>
    <property type="match status" value="1"/>
</dbReference>
<dbReference type="InterPro" id="IPR029063">
    <property type="entry name" value="SAM-dependent_MTases_sf"/>
</dbReference>
<dbReference type="InterPro" id="IPR025835">
    <property type="entry name" value="Thiopurine_S-MeTrfase"/>
</dbReference>
<dbReference type="InterPro" id="IPR008854">
    <property type="entry name" value="TPMT"/>
</dbReference>
<dbReference type="PANTHER" id="PTHR10259">
    <property type="entry name" value="THIOPURINE S-METHYLTRANSFERASE"/>
    <property type="match status" value="1"/>
</dbReference>
<dbReference type="PANTHER" id="PTHR10259:SF11">
    <property type="entry name" value="THIOPURINE S-METHYLTRANSFERASE"/>
    <property type="match status" value="1"/>
</dbReference>
<dbReference type="Pfam" id="PF05724">
    <property type="entry name" value="TPMT"/>
    <property type="match status" value="1"/>
</dbReference>
<dbReference type="PIRSF" id="PIRSF023956">
    <property type="entry name" value="Thiopurine_S-methyltransferase"/>
    <property type="match status" value="1"/>
</dbReference>
<dbReference type="SUPFAM" id="SSF53335">
    <property type="entry name" value="S-adenosyl-L-methionine-dependent methyltransferases"/>
    <property type="match status" value="1"/>
</dbReference>
<dbReference type="PROSITE" id="PS51585">
    <property type="entry name" value="SAM_MT_TPMT"/>
    <property type="match status" value="1"/>
</dbReference>
<organism>
    <name type="scientific">Mus spretus</name>
    <name type="common">Western Mediterranean mouse</name>
    <name type="synonym">Algerian mouse</name>
    <dbReference type="NCBI Taxonomy" id="10096"/>
    <lineage>
        <taxon>Eukaryota</taxon>
        <taxon>Metazoa</taxon>
        <taxon>Chordata</taxon>
        <taxon>Craniata</taxon>
        <taxon>Vertebrata</taxon>
        <taxon>Euteleostomi</taxon>
        <taxon>Mammalia</taxon>
        <taxon>Eutheria</taxon>
        <taxon>Euarchontoglires</taxon>
        <taxon>Glires</taxon>
        <taxon>Rodentia</taxon>
        <taxon>Myomorpha</taxon>
        <taxon>Muroidea</taxon>
        <taxon>Muridae</taxon>
        <taxon>Murinae</taxon>
        <taxon>Mus</taxon>
        <taxon>Mus</taxon>
    </lineage>
</organism>
<feature type="chain" id="PRO_0000220106" description="Thiopurine S-methyltransferase">
    <location>
        <begin position="1"/>
        <end position="240"/>
    </location>
</feature>
<feature type="binding site" evidence="1">
    <location>
        <begin position="24"/>
        <end position="35"/>
    </location>
    <ligand>
        <name>S-adenosyl-L-methionine</name>
        <dbReference type="ChEBI" id="CHEBI:59789"/>
    </ligand>
</feature>
<feature type="binding site" evidence="1">
    <location>
        <position position="35"/>
    </location>
    <ligand>
        <name>substrate</name>
    </ligand>
</feature>
<feature type="binding site" evidence="1">
    <location>
        <position position="64"/>
    </location>
    <ligand>
        <name>S-adenosyl-L-methionine</name>
        <dbReference type="ChEBI" id="CHEBI:59789"/>
    </ligand>
</feature>
<feature type="binding site" evidence="1">
    <location>
        <position position="85"/>
    </location>
    <ligand>
        <name>S-adenosyl-L-methionine</name>
        <dbReference type="ChEBI" id="CHEBI:59789"/>
    </ligand>
</feature>
<feature type="binding site" evidence="1">
    <location>
        <begin position="129"/>
        <end position="130"/>
    </location>
    <ligand>
        <name>S-adenosyl-L-methionine</name>
        <dbReference type="ChEBI" id="CHEBI:59789"/>
    </ligand>
</feature>
<feature type="binding site" evidence="1">
    <location>
        <position position="147"/>
    </location>
    <ligand>
        <name>S-adenosyl-L-methionine</name>
        <dbReference type="ChEBI" id="CHEBI:59789"/>
    </ligand>
</feature>
<feature type="modified residue" description="N6-acetyllysine" evidence="3">
    <location>
        <position position="53"/>
    </location>
</feature>
<keyword id="KW-0007">Acetylation</keyword>
<keyword id="KW-0963">Cytoplasm</keyword>
<keyword id="KW-0489">Methyltransferase</keyword>
<keyword id="KW-0949">S-adenosyl-L-methionine</keyword>
<keyword id="KW-0808">Transferase</keyword>
<name>TPMT_MUSSP</name>
<reference key="1">
    <citation type="submission" date="1997-12" db="EMBL/GenBank/DDBJ databases">
        <title>Mouse thiopurine methyltransferase pharmacogenetics: cDNA cloning and characterization and processed pseudogene cloning.</title>
        <authorList>
            <person name="Adjei A.A."/>
            <person name="Johnson G.B."/>
            <person name="Otterness D.M."/>
            <person name="Weinshilboum R.M."/>
        </authorList>
    </citation>
    <scope>NUCLEOTIDE SEQUENCE [MRNA]</scope>
    <source>
        <strain>EI</strain>
    </source>
</reference>
<protein>
    <recommendedName>
        <fullName>Thiopurine S-methyltransferase</fullName>
        <ecNumber>2.1.1.67</ecNumber>
    </recommendedName>
    <alternativeName>
        <fullName>Thiopurine methyltransferase</fullName>
    </alternativeName>
</protein>
<evidence type="ECO:0000250" key="1"/>
<evidence type="ECO:0000250" key="2">
    <source>
        <dbReference type="UniProtKB" id="O55060"/>
    </source>
</evidence>
<evidence type="ECO:0000250" key="3">
    <source>
        <dbReference type="UniProtKB" id="P51580"/>
    </source>
</evidence>
<evidence type="ECO:0000305" key="4"/>
<proteinExistence type="evidence at transcript level"/>
<gene>
    <name type="primary">Tpmt</name>
</gene>
<accession>Q9QX22</accession>
<comment type="function">
    <text evidence="2">Catalyzes the S-methylation of thiopurine drugs such as 6-mercaptopurine (also called mercaptopurine, 6-MP or its brand name Purinethol) using S-adenosyl-L-methionine as the methyl donor. TPMT activity modulates the cytotoxic effects of thiopurine prodrugs. A natural substrate for this enzyme has yet to be identified.</text>
</comment>
<comment type="catalytic activity">
    <reaction evidence="2">
        <text>S-adenosyl-L-methionine + a thiopurine = S-adenosyl-L-homocysteine + a thiopurine S-methylether.</text>
        <dbReference type="EC" id="2.1.1.67"/>
    </reaction>
</comment>
<comment type="catalytic activity">
    <reaction evidence="2">
        <text>mercaptopurine + S-adenosyl-L-methionine = 6-methylthiopurine + S-adenosyl-L-homocysteine + H(+)</text>
        <dbReference type="Rhea" id="RHEA:12609"/>
        <dbReference type="ChEBI" id="CHEBI:15378"/>
        <dbReference type="ChEBI" id="CHEBI:28279"/>
        <dbReference type="ChEBI" id="CHEBI:50667"/>
        <dbReference type="ChEBI" id="CHEBI:57856"/>
        <dbReference type="ChEBI" id="CHEBI:59789"/>
        <dbReference type="EC" id="2.1.1.67"/>
    </reaction>
</comment>
<comment type="subunit">
    <text evidence="2">Monomer.</text>
</comment>
<comment type="subcellular location">
    <subcellularLocation>
        <location>Cytoplasm</location>
    </subcellularLocation>
</comment>
<comment type="similarity">
    <text evidence="4">Belongs to the class I-like SAM-binding methyltransferase superfamily. TPMT family.</text>
</comment>
<sequence length="240" mass="27618">MSLDMKEHPDAEVQKNRVLTLEDWKDKWVTRHISFHQEQGHQLLKKHLDTFLKGQSGLRVFFPLCGKAVEMKWFADRGHTVVGVEISEIGIREFFAEQNLSYTEEPLAEIAGAKVFKSSSGSISLYCCSIFDLPRANIGKFDRIWDRGALVAINPGDHDRYADIILSLLRKEFQYLMAVLSYDPTKHAGPPFYVPSAELKRLFGTKCSMQCLEEVDALEERHKAWGLDYLFEKLYLLTEK</sequence>